<accession>P30983</accession>
<comment type="function">
    <text evidence="3">Shared alpha chain of heterodimeric glycoprotein hormones. These hormones bind specific receptors on target cells that in turn activate downstream signaling pathways. Involved in gametogenesis and steroidogenesis.</text>
</comment>
<comment type="subunit">
    <text evidence="3">Heterodimer. Glycoprotein hormones are heterodimers composed of a common alpha chain described here and a unique beta chain which confers their biological specificity to the different hormones.</text>
</comment>
<comment type="subcellular location">
    <subcellularLocation>
        <location evidence="3">Secreted</location>
    </subcellularLocation>
</comment>
<comment type="similarity">
    <text evidence="4">Belongs to the glycoprotein hormones subunit alpha family.</text>
</comment>
<name>GLHA_CTEID</name>
<proteinExistence type="inferred from homology"/>
<feature type="signal peptide" evidence="1">
    <location>
        <begin position="1"/>
        <end position="23"/>
    </location>
</feature>
<feature type="chain" id="PRO_0000011662" description="Glycoprotein hormones alpha chain">
    <location>
        <begin position="24"/>
        <end position="118"/>
    </location>
</feature>
<feature type="glycosylation site" description="N-linked (GlcNAc...) asparagine" evidence="2">
    <location>
        <position position="79"/>
    </location>
</feature>
<feature type="glycosylation site" description="N-linked (GlcNAc...) asparagine" evidence="2">
    <location>
        <position position="104"/>
    </location>
</feature>
<feature type="disulfide bond" evidence="2">
    <location>
        <begin position="34"/>
        <end position="58"/>
    </location>
</feature>
<feature type="disulfide bond" evidence="2">
    <location>
        <begin position="37"/>
        <end position="87"/>
    </location>
</feature>
<feature type="disulfide bond" evidence="2">
    <location>
        <begin position="55"/>
        <end position="108"/>
    </location>
</feature>
<feature type="disulfide bond" evidence="2">
    <location>
        <begin position="59"/>
        <end position="110"/>
    </location>
</feature>
<feature type="disulfide bond" evidence="2">
    <location>
        <begin position="86"/>
        <end position="113"/>
    </location>
</feature>
<gene>
    <name type="primary">cga</name>
</gene>
<organism>
    <name type="scientific">Ctenopharyngodon idella</name>
    <name type="common">Grass carp</name>
    <name type="synonym">Leuciscus idella</name>
    <dbReference type="NCBI Taxonomy" id="7959"/>
    <lineage>
        <taxon>Eukaryota</taxon>
        <taxon>Metazoa</taxon>
        <taxon>Chordata</taxon>
        <taxon>Craniata</taxon>
        <taxon>Vertebrata</taxon>
        <taxon>Euteleostomi</taxon>
        <taxon>Actinopterygii</taxon>
        <taxon>Neopterygii</taxon>
        <taxon>Teleostei</taxon>
        <taxon>Ostariophysi</taxon>
        <taxon>Cypriniformes</taxon>
        <taxon>Xenocyprididae</taxon>
        <taxon>Xenocypridinae</taxon>
        <taxon>Ctenopharyngodon</taxon>
    </lineage>
</organism>
<evidence type="ECO:0000250" key="1"/>
<evidence type="ECO:0000250" key="2">
    <source>
        <dbReference type="UniProtKB" id="P01215"/>
    </source>
</evidence>
<evidence type="ECO:0000250" key="3">
    <source>
        <dbReference type="UniProtKB" id="P37204"/>
    </source>
</evidence>
<evidence type="ECO:0000305" key="4"/>
<protein>
    <recommendedName>
        <fullName>Glycoprotein hormones alpha chain</fullName>
    </recommendedName>
    <alternativeName>
        <fullName>GTH-alpha</fullName>
    </alternativeName>
    <alternativeName>
        <fullName>Gonadotropin alpha chain</fullName>
    </alternativeName>
</protein>
<sequence length="118" mass="13453">MFWTRYAGASILLFLMLIHLGQVYPRNDMTNFGCEECKLKENNIFSKPGAPVYQCMGCCFSRAYPTPLRSKKTMLVPKNITSEATCCVAKEVKRVLVNDVKLVNHTDCHCSTCYYHKS</sequence>
<dbReference type="EMBL" id="X61050">
    <property type="protein sequence ID" value="CAA43384.1"/>
    <property type="molecule type" value="mRNA"/>
</dbReference>
<dbReference type="PIR" id="S16762">
    <property type="entry name" value="S16762"/>
</dbReference>
<dbReference type="RefSeq" id="XP_051724099.1">
    <property type="nucleotide sequence ID" value="XM_051868139.1"/>
</dbReference>
<dbReference type="SMR" id="P30983"/>
<dbReference type="GlyCosmos" id="P30983">
    <property type="glycosylation" value="2 sites, No reported glycans"/>
</dbReference>
<dbReference type="GeneID" id="127498603"/>
<dbReference type="OrthoDB" id="9852859at2759"/>
<dbReference type="GO" id="GO:0005615">
    <property type="term" value="C:extracellular space"/>
    <property type="evidence" value="ECO:0000250"/>
    <property type="project" value="UniProtKB"/>
</dbReference>
<dbReference type="GO" id="GO:0016914">
    <property type="term" value="C:follicle-stimulating hormone complex"/>
    <property type="evidence" value="ECO:0000250"/>
    <property type="project" value="UniProtKB"/>
</dbReference>
<dbReference type="GO" id="GO:0016913">
    <property type="term" value="F:follicle-stimulating hormone activity"/>
    <property type="evidence" value="ECO:0000250"/>
    <property type="project" value="UniProtKB"/>
</dbReference>
<dbReference type="GO" id="GO:0007186">
    <property type="term" value="P:G protein-coupled receptor signaling pathway"/>
    <property type="evidence" value="ECO:0000250"/>
    <property type="project" value="UniProtKB"/>
</dbReference>
<dbReference type="GO" id="GO:0010893">
    <property type="term" value="P:positive regulation of steroid biosynthetic process"/>
    <property type="evidence" value="ECO:0000250"/>
    <property type="project" value="UniProtKB"/>
</dbReference>
<dbReference type="GO" id="GO:0010469">
    <property type="term" value="P:regulation of signaling receptor activity"/>
    <property type="evidence" value="ECO:0000250"/>
    <property type="project" value="UniProtKB"/>
</dbReference>
<dbReference type="GO" id="GO:0006590">
    <property type="term" value="P:thyroid hormone generation"/>
    <property type="evidence" value="ECO:0007669"/>
    <property type="project" value="TreeGrafter"/>
</dbReference>
<dbReference type="FunFam" id="2.10.90.10:FF:000011">
    <property type="entry name" value="Glycoprotein hormones alpha chain"/>
    <property type="match status" value="1"/>
</dbReference>
<dbReference type="Gene3D" id="2.10.90.10">
    <property type="entry name" value="Cystine-knot cytokines"/>
    <property type="match status" value="1"/>
</dbReference>
<dbReference type="InterPro" id="IPR029034">
    <property type="entry name" value="Cystine-knot_cytokine"/>
</dbReference>
<dbReference type="InterPro" id="IPR000476">
    <property type="entry name" value="Glyco_hormone"/>
</dbReference>
<dbReference type="PANTHER" id="PTHR11509">
    <property type="entry name" value="GLYCOPROTEIN HORMONE ALPHA CHAIN"/>
    <property type="match status" value="1"/>
</dbReference>
<dbReference type="PANTHER" id="PTHR11509:SF0">
    <property type="entry name" value="GLYCOPROTEIN HORMONES ALPHA CHAIN"/>
    <property type="match status" value="1"/>
</dbReference>
<dbReference type="Pfam" id="PF00236">
    <property type="entry name" value="Hormone_6"/>
    <property type="match status" value="1"/>
</dbReference>
<dbReference type="PRINTS" id="PR00274">
    <property type="entry name" value="GLYCOHORMONE"/>
</dbReference>
<dbReference type="SMART" id="SM00067">
    <property type="entry name" value="GHA"/>
    <property type="match status" value="1"/>
</dbReference>
<dbReference type="SUPFAM" id="SSF57501">
    <property type="entry name" value="Cystine-knot cytokines"/>
    <property type="match status" value="1"/>
</dbReference>
<dbReference type="PROSITE" id="PS00779">
    <property type="entry name" value="GLYCO_HORMONE_ALPHA_1"/>
    <property type="match status" value="1"/>
</dbReference>
<dbReference type="PROSITE" id="PS00780">
    <property type="entry name" value="GLYCO_HORMONE_ALPHA_2"/>
    <property type="match status" value="1"/>
</dbReference>
<dbReference type="PROSITE" id="PS50277">
    <property type="entry name" value="GLYCO_HORMONE_ALPHA_3"/>
    <property type="match status" value="1"/>
</dbReference>
<keyword id="KW-1015">Disulfide bond</keyword>
<keyword id="KW-0325">Glycoprotein</keyword>
<keyword id="KW-0372">Hormone</keyword>
<keyword id="KW-0964">Secreted</keyword>
<keyword id="KW-0732">Signal</keyword>
<reference key="1">
    <citation type="submission" date="1991-07" db="EMBL/GenBank/DDBJ databases">
        <authorList>
            <person name="Chang Y.S."/>
            <person name="Huang F.-L."/>
            <person name="Lo T.-B."/>
        </authorList>
    </citation>
    <scope>NUCLEOTIDE SEQUENCE [MRNA]</scope>
    <source>
        <tissue>Pituitary</tissue>
    </source>
</reference>